<protein>
    <recommendedName>
        <fullName>Uncharacterized protein MJ0776</fullName>
    </recommendedName>
</protein>
<feature type="chain" id="PRO_0000107027" description="Uncharacterized protein MJ0776">
    <location>
        <begin position="1"/>
        <end position="383"/>
    </location>
</feature>
<feature type="transmembrane region" description="Helical" evidence="1">
    <location>
        <begin position="6"/>
        <end position="26"/>
    </location>
</feature>
<feature type="domain" description="ATP-grasp" evidence="2">
    <location>
        <begin position="131"/>
        <end position="303"/>
    </location>
</feature>
<evidence type="ECO:0000255" key="1"/>
<evidence type="ECO:0000255" key="2">
    <source>
        <dbReference type="PROSITE-ProRule" id="PRU00409"/>
    </source>
</evidence>
<evidence type="ECO:0000305" key="3"/>
<dbReference type="EMBL" id="L77117">
    <property type="protein sequence ID" value="AAB98766.1"/>
    <property type="molecule type" value="Genomic_DNA"/>
</dbReference>
<dbReference type="PIR" id="H64396">
    <property type="entry name" value="H64396"/>
</dbReference>
<dbReference type="SMR" id="Q58186"/>
<dbReference type="STRING" id="243232.MJ_0776"/>
<dbReference type="PaxDb" id="243232-MJ_0776"/>
<dbReference type="EnsemblBacteria" id="AAB98766">
    <property type="protein sequence ID" value="AAB98766"/>
    <property type="gene ID" value="MJ_0776"/>
</dbReference>
<dbReference type="KEGG" id="mja:MJ_0776"/>
<dbReference type="eggNOG" id="arCOG01595">
    <property type="taxonomic scope" value="Archaea"/>
</dbReference>
<dbReference type="HOGENOM" id="CLU_057102_0_0_2"/>
<dbReference type="InParanoid" id="Q58186"/>
<dbReference type="OrthoDB" id="11959at2157"/>
<dbReference type="PhylomeDB" id="Q58186"/>
<dbReference type="BioCyc" id="MetaCyc:MONOMER-18797"/>
<dbReference type="Proteomes" id="UP000000805">
    <property type="component" value="Chromosome"/>
</dbReference>
<dbReference type="GO" id="GO:0005737">
    <property type="term" value="C:cytoplasm"/>
    <property type="evidence" value="ECO:0000318"/>
    <property type="project" value="GO_Central"/>
</dbReference>
<dbReference type="GO" id="GO:0016020">
    <property type="term" value="C:membrane"/>
    <property type="evidence" value="ECO:0007669"/>
    <property type="project" value="UniProtKB-SubCell"/>
</dbReference>
<dbReference type="GO" id="GO:0005524">
    <property type="term" value="F:ATP binding"/>
    <property type="evidence" value="ECO:0007669"/>
    <property type="project" value="InterPro"/>
</dbReference>
<dbReference type="GO" id="GO:0043774">
    <property type="term" value="F:coenzyme F420-2 alpha-glutamyl ligase activity"/>
    <property type="evidence" value="ECO:0000318"/>
    <property type="project" value="GO_Central"/>
</dbReference>
<dbReference type="GO" id="GO:0046872">
    <property type="term" value="F:metal ion binding"/>
    <property type="evidence" value="ECO:0007669"/>
    <property type="project" value="InterPro"/>
</dbReference>
<dbReference type="Gene3D" id="2.30.36.100">
    <property type="match status" value="1"/>
</dbReference>
<dbReference type="Gene3D" id="3.30.470.20">
    <property type="entry name" value="ATP-grasp fold, B domain"/>
    <property type="match status" value="1"/>
</dbReference>
<dbReference type="InterPro" id="IPR011761">
    <property type="entry name" value="ATP-grasp"/>
</dbReference>
<dbReference type="InterPro" id="IPR003806">
    <property type="entry name" value="ATP-grasp_PylC-type"/>
</dbReference>
<dbReference type="InterPro" id="IPR016677">
    <property type="entry name" value="UCP016817_carboligase"/>
</dbReference>
<dbReference type="PANTHER" id="PTHR21621:SF2">
    <property type="entry name" value="COENZYME GAMMA-F420-2:ALPHA-L-GLUTAMATE LIGASE"/>
    <property type="match status" value="1"/>
</dbReference>
<dbReference type="PANTHER" id="PTHR21621">
    <property type="entry name" value="RIBOSOMAL PROTEIN S6 MODIFICATION PROTEIN"/>
    <property type="match status" value="1"/>
</dbReference>
<dbReference type="Pfam" id="PF02655">
    <property type="entry name" value="ATP-grasp_3"/>
    <property type="match status" value="1"/>
</dbReference>
<dbReference type="PIRSF" id="PIRSF016817">
    <property type="entry name" value="UCP016817_carboligase"/>
    <property type="match status" value="1"/>
</dbReference>
<dbReference type="SUPFAM" id="SSF56059">
    <property type="entry name" value="Glutathione synthetase ATP-binding domain-like"/>
    <property type="match status" value="1"/>
</dbReference>
<dbReference type="PROSITE" id="PS50975">
    <property type="entry name" value="ATP_GRASP"/>
    <property type="match status" value="1"/>
</dbReference>
<name>Y776_METJA</name>
<keyword id="KW-0472">Membrane</keyword>
<keyword id="KW-1185">Reference proteome</keyword>
<keyword id="KW-0812">Transmembrane</keyword>
<keyword id="KW-1133">Transmembrane helix</keyword>
<proteinExistence type="predicted"/>
<sequence>MNNFTLFLFSCLYFIGGNLKALVLGINTRPVVNSLKKLGFYVYSVSYYAPEDLNADEKYYLINPLVHGRLKENYDENKLIEIANKLADEVDCIFITSGVFEFENSKIPGWDNVIGNGPKKINEISNKYKTYKKLKNLGFNIPETKKINNKTQLYKFLEEFKTCILKPIYGSGGSILKIELNNFDDEIINEIKFPIIAQEYIRGKSFSANFIGNTFITFNKQIIIKGMYAGNLTPYINLPNKFVEIFGEVIESFELKGMSGIDFLIKDNGPYIVDINPRILGTYETIEMSASQNLAMVLLNNKYAKEIKPRKVYIKRILFAKEKIIANISKRDFIHDIPKKNAVIEKGEPIATVIAKENIKSIINSVYEECAEYEKRKEDRENI</sequence>
<organism>
    <name type="scientific">Methanocaldococcus jannaschii (strain ATCC 43067 / DSM 2661 / JAL-1 / JCM 10045 / NBRC 100440)</name>
    <name type="common">Methanococcus jannaschii</name>
    <dbReference type="NCBI Taxonomy" id="243232"/>
    <lineage>
        <taxon>Archaea</taxon>
        <taxon>Methanobacteriati</taxon>
        <taxon>Methanobacteriota</taxon>
        <taxon>Methanomada group</taxon>
        <taxon>Methanococci</taxon>
        <taxon>Methanococcales</taxon>
        <taxon>Methanocaldococcaceae</taxon>
        <taxon>Methanocaldococcus</taxon>
    </lineage>
</organism>
<comment type="subcellular location">
    <subcellularLocation>
        <location evidence="3">Membrane</location>
        <topology evidence="3">Single-pass membrane protein</topology>
    </subcellularLocation>
</comment>
<gene>
    <name type="ordered locus">MJ0776</name>
</gene>
<reference key="1">
    <citation type="journal article" date="1996" name="Science">
        <title>Complete genome sequence of the methanogenic archaeon, Methanococcus jannaschii.</title>
        <authorList>
            <person name="Bult C.J."/>
            <person name="White O."/>
            <person name="Olsen G.J."/>
            <person name="Zhou L."/>
            <person name="Fleischmann R.D."/>
            <person name="Sutton G.G."/>
            <person name="Blake J.A."/>
            <person name="FitzGerald L.M."/>
            <person name="Clayton R.A."/>
            <person name="Gocayne J.D."/>
            <person name="Kerlavage A.R."/>
            <person name="Dougherty B.A."/>
            <person name="Tomb J.-F."/>
            <person name="Adams M.D."/>
            <person name="Reich C.I."/>
            <person name="Overbeek R."/>
            <person name="Kirkness E.F."/>
            <person name="Weinstock K.G."/>
            <person name="Merrick J.M."/>
            <person name="Glodek A."/>
            <person name="Scott J.L."/>
            <person name="Geoghagen N.S.M."/>
            <person name="Weidman J.F."/>
            <person name="Fuhrmann J.L."/>
            <person name="Nguyen D."/>
            <person name="Utterback T.R."/>
            <person name="Kelley J.M."/>
            <person name="Peterson J.D."/>
            <person name="Sadow P.W."/>
            <person name="Hanna M.C."/>
            <person name="Cotton M.D."/>
            <person name="Roberts K.M."/>
            <person name="Hurst M.A."/>
            <person name="Kaine B.P."/>
            <person name="Borodovsky M."/>
            <person name="Klenk H.-P."/>
            <person name="Fraser C.M."/>
            <person name="Smith H.O."/>
            <person name="Woese C.R."/>
            <person name="Venter J.C."/>
        </authorList>
    </citation>
    <scope>NUCLEOTIDE SEQUENCE [LARGE SCALE GENOMIC DNA]</scope>
    <source>
        <strain>ATCC 43067 / DSM 2661 / JAL-1 / JCM 10045 / NBRC 100440</strain>
    </source>
</reference>
<accession>Q58186</accession>